<dbReference type="EMBL" id="CP001016">
    <property type="protein sequence ID" value="ACB95013.1"/>
    <property type="molecule type" value="Genomic_DNA"/>
</dbReference>
<dbReference type="RefSeq" id="WP_012384370.1">
    <property type="nucleotide sequence ID" value="NC_010581.1"/>
</dbReference>
<dbReference type="SMR" id="B2IK81"/>
<dbReference type="STRING" id="395963.Bind_1373"/>
<dbReference type="KEGG" id="bid:Bind_1373"/>
<dbReference type="eggNOG" id="COG0200">
    <property type="taxonomic scope" value="Bacteria"/>
</dbReference>
<dbReference type="HOGENOM" id="CLU_055188_4_0_5"/>
<dbReference type="OrthoDB" id="9810293at2"/>
<dbReference type="Proteomes" id="UP000001695">
    <property type="component" value="Chromosome"/>
</dbReference>
<dbReference type="GO" id="GO:0022625">
    <property type="term" value="C:cytosolic large ribosomal subunit"/>
    <property type="evidence" value="ECO:0007669"/>
    <property type="project" value="TreeGrafter"/>
</dbReference>
<dbReference type="GO" id="GO:0019843">
    <property type="term" value="F:rRNA binding"/>
    <property type="evidence" value="ECO:0007669"/>
    <property type="project" value="UniProtKB-UniRule"/>
</dbReference>
<dbReference type="GO" id="GO:0003735">
    <property type="term" value="F:structural constituent of ribosome"/>
    <property type="evidence" value="ECO:0007669"/>
    <property type="project" value="InterPro"/>
</dbReference>
<dbReference type="GO" id="GO:0006412">
    <property type="term" value="P:translation"/>
    <property type="evidence" value="ECO:0007669"/>
    <property type="project" value="UniProtKB-UniRule"/>
</dbReference>
<dbReference type="Gene3D" id="3.100.10.10">
    <property type="match status" value="1"/>
</dbReference>
<dbReference type="HAMAP" id="MF_01341">
    <property type="entry name" value="Ribosomal_uL15"/>
    <property type="match status" value="1"/>
</dbReference>
<dbReference type="InterPro" id="IPR030878">
    <property type="entry name" value="Ribosomal_uL15"/>
</dbReference>
<dbReference type="InterPro" id="IPR021131">
    <property type="entry name" value="Ribosomal_uL15/eL18"/>
</dbReference>
<dbReference type="InterPro" id="IPR036227">
    <property type="entry name" value="Ribosomal_uL15/eL18_sf"/>
</dbReference>
<dbReference type="InterPro" id="IPR005749">
    <property type="entry name" value="Ribosomal_uL15_bac-type"/>
</dbReference>
<dbReference type="InterPro" id="IPR001196">
    <property type="entry name" value="Ribosomal_uL15_CS"/>
</dbReference>
<dbReference type="NCBIfam" id="TIGR01071">
    <property type="entry name" value="rplO_bact"/>
    <property type="match status" value="1"/>
</dbReference>
<dbReference type="PANTHER" id="PTHR12934">
    <property type="entry name" value="50S RIBOSOMAL PROTEIN L15"/>
    <property type="match status" value="1"/>
</dbReference>
<dbReference type="PANTHER" id="PTHR12934:SF11">
    <property type="entry name" value="LARGE RIBOSOMAL SUBUNIT PROTEIN UL15M"/>
    <property type="match status" value="1"/>
</dbReference>
<dbReference type="Pfam" id="PF00828">
    <property type="entry name" value="Ribosomal_L27A"/>
    <property type="match status" value="1"/>
</dbReference>
<dbReference type="SUPFAM" id="SSF52080">
    <property type="entry name" value="Ribosomal proteins L15p and L18e"/>
    <property type="match status" value="1"/>
</dbReference>
<dbReference type="PROSITE" id="PS00475">
    <property type="entry name" value="RIBOSOMAL_L15"/>
    <property type="match status" value="1"/>
</dbReference>
<sequence>MKLNDISDNPGSSKSRMRVGRGIGSGKGKTCGRGVKGQKARTGVAIKGFEGGQMPIHRRLPKRGFWNPFSTDYNEVNLGRIQTAIDAGKLNVALPVTIEALVEAGVCAKARDGVKILGNGELKAKLTFEVASASKTAVAAIEQLGGSITLLKAQPAAAEA</sequence>
<accession>B2IK81</accession>
<reference key="1">
    <citation type="journal article" date="2010" name="J. Bacteriol.">
        <title>Complete genome sequence of Beijerinckia indica subsp. indica.</title>
        <authorList>
            <person name="Tamas I."/>
            <person name="Dedysh S.N."/>
            <person name="Liesack W."/>
            <person name="Stott M.B."/>
            <person name="Alam M."/>
            <person name="Murrell J.C."/>
            <person name="Dunfield P.F."/>
        </authorList>
    </citation>
    <scope>NUCLEOTIDE SEQUENCE [LARGE SCALE GENOMIC DNA]</scope>
    <source>
        <strain>ATCC 9039 / DSM 1715 / NCIMB 8712</strain>
    </source>
</reference>
<feature type="chain" id="PRO_1000142777" description="Large ribosomal subunit protein uL15">
    <location>
        <begin position="1"/>
        <end position="160"/>
    </location>
</feature>
<feature type="region of interest" description="Disordered" evidence="2">
    <location>
        <begin position="1"/>
        <end position="35"/>
    </location>
</feature>
<feature type="compositionally biased region" description="Polar residues" evidence="2">
    <location>
        <begin position="1"/>
        <end position="14"/>
    </location>
</feature>
<feature type="compositionally biased region" description="Gly residues" evidence="2">
    <location>
        <begin position="21"/>
        <end position="35"/>
    </location>
</feature>
<comment type="function">
    <text evidence="1">Binds to the 23S rRNA.</text>
</comment>
<comment type="subunit">
    <text evidence="1">Part of the 50S ribosomal subunit.</text>
</comment>
<comment type="similarity">
    <text evidence="1">Belongs to the universal ribosomal protein uL15 family.</text>
</comment>
<name>RL15_BEII9</name>
<protein>
    <recommendedName>
        <fullName evidence="1">Large ribosomal subunit protein uL15</fullName>
    </recommendedName>
    <alternativeName>
        <fullName evidence="3">50S ribosomal protein L15</fullName>
    </alternativeName>
</protein>
<proteinExistence type="inferred from homology"/>
<evidence type="ECO:0000255" key="1">
    <source>
        <dbReference type="HAMAP-Rule" id="MF_01341"/>
    </source>
</evidence>
<evidence type="ECO:0000256" key="2">
    <source>
        <dbReference type="SAM" id="MobiDB-lite"/>
    </source>
</evidence>
<evidence type="ECO:0000305" key="3"/>
<organism>
    <name type="scientific">Beijerinckia indica subsp. indica (strain ATCC 9039 / DSM 1715 / NCIMB 8712)</name>
    <dbReference type="NCBI Taxonomy" id="395963"/>
    <lineage>
        <taxon>Bacteria</taxon>
        <taxon>Pseudomonadati</taxon>
        <taxon>Pseudomonadota</taxon>
        <taxon>Alphaproteobacteria</taxon>
        <taxon>Hyphomicrobiales</taxon>
        <taxon>Beijerinckiaceae</taxon>
        <taxon>Beijerinckia</taxon>
    </lineage>
</organism>
<keyword id="KW-1185">Reference proteome</keyword>
<keyword id="KW-0687">Ribonucleoprotein</keyword>
<keyword id="KW-0689">Ribosomal protein</keyword>
<keyword id="KW-0694">RNA-binding</keyword>
<keyword id="KW-0699">rRNA-binding</keyword>
<gene>
    <name evidence="1" type="primary">rplO</name>
    <name type="ordered locus">Bind_1373</name>
</gene>